<sequence length="675" mass="74091">MAAQKKKAQDEYGAASITILEGLEAVRKRPGMYIGSTGERGLHHLIWEVVDNAVDEAMAGYATTVNVVLLEDGGVEVADDGRGIPVATHASGIPTVDVVMTQLHAGGKFDSDAYAISGGLHGVGVSVVNALSTRLEVEIKRDGYEWSQVYEKSEPLGLKQGAPTKKTGSTVRFWADPAVFETTEYDFETVARRLQEMAFLNKGLTINLTDERVTQDEVVDEVVSDVAEAPKSASERAAESTAPHKVKSRTFHYPGGLVDFVKHINRTKNAIHSSIVDFSGKGTGHEVEIAMQWNAGYSESVHTFANTINTHEGGTHEEGFRSALTSVVNKYAKDRKLLKDKDPNLTGDDIREGLAAVISVKVSEPQFEGQTKTKLGNTEVKSFVQKVCNEQLTHWFEANPTDAKVVVNKAVSSAQARIAARKARELVRRKSATDIGGLPGKLADCRSTDPRKSELYVVEGDSAGGSAKSGRDSMFQAILPLRGKIINVEKARIDRVLKNTEVQAIITALGTGIHDEFDIGKLRYHKIVLMADADVDGQHISTLLLTLLFRFMRPLIENGHVFLAQPPLYKLKWQRSDPEFAYSDRERDGLLEAGLKAGKKINKEDGIQRYKGLGEMDAKELWETTMDPSVRVLRQVTLDDAAAADELFSILMGEDVDARRSFITRNAKDVRFLDV</sequence>
<gene>
    <name evidence="1" type="primary">gyrB</name>
    <name type="ordered locus">MRA_0005</name>
</gene>
<feature type="chain" id="PRO_0000300059" description="DNA gyrase subunit B">
    <location>
        <begin position="1"/>
        <end position="675"/>
    </location>
</feature>
<feature type="domain" description="Toprim" evidence="1">
    <location>
        <begin position="453"/>
        <end position="567"/>
    </location>
</feature>
<feature type="binding site" evidence="1">
    <location>
        <position position="459"/>
    </location>
    <ligand>
        <name>Mg(2+)</name>
        <dbReference type="ChEBI" id="CHEBI:18420"/>
        <label>1</label>
        <note>catalytic</note>
    </ligand>
</feature>
<feature type="binding site" evidence="1">
    <location>
        <position position="532"/>
    </location>
    <ligand>
        <name>Mg(2+)</name>
        <dbReference type="ChEBI" id="CHEBI:18420"/>
        <label>1</label>
        <note>catalytic</note>
    </ligand>
</feature>
<feature type="binding site" evidence="1">
    <location>
        <position position="532"/>
    </location>
    <ligand>
        <name>Mg(2+)</name>
        <dbReference type="ChEBI" id="CHEBI:18420"/>
        <label>2</label>
    </ligand>
</feature>
<feature type="binding site" evidence="1">
    <location>
        <position position="534"/>
    </location>
    <ligand>
        <name>Mg(2+)</name>
        <dbReference type="ChEBI" id="CHEBI:18420"/>
        <label>2</label>
    </ligand>
</feature>
<feature type="site" description="Interaction with DNA" evidence="1">
    <location>
        <position position="484"/>
    </location>
</feature>
<feature type="site" description="Interaction with DNA" evidence="1">
    <location>
        <position position="487"/>
    </location>
</feature>
<name>GYRB_MYCTA</name>
<dbReference type="EC" id="5.6.2.2" evidence="1"/>
<dbReference type="EMBL" id="X78888">
    <property type="protein sequence ID" value="CAA55486.1"/>
    <property type="status" value="ALT_INIT"/>
    <property type="molecule type" value="Genomic_DNA"/>
</dbReference>
<dbReference type="EMBL" id="CP000611">
    <property type="protein sequence ID" value="ABQ71723.1"/>
    <property type="status" value="ALT_INIT"/>
    <property type="molecule type" value="Genomic_DNA"/>
</dbReference>
<dbReference type="PIR" id="S44198">
    <property type="entry name" value="S44198"/>
</dbReference>
<dbReference type="RefSeq" id="WP_003917863.1">
    <property type="nucleotide sequence ID" value="NZ_CP016972.1"/>
</dbReference>
<dbReference type="SMR" id="A5TY73"/>
<dbReference type="GeneID" id="45423962"/>
<dbReference type="KEGG" id="mra:MRA_0005"/>
<dbReference type="eggNOG" id="COG0187">
    <property type="taxonomic scope" value="Bacteria"/>
</dbReference>
<dbReference type="HOGENOM" id="CLU_006146_4_1_11"/>
<dbReference type="Proteomes" id="UP000001988">
    <property type="component" value="Chromosome"/>
</dbReference>
<dbReference type="GO" id="GO:0005694">
    <property type="term" value="C:chromosome"/>
    <property type="evidence" value="ECO:0007669"/>
    <property type="project" value="InterPro"/>
</dbReference>
<dbReference type="GO" id="GO:0005737">
    <property type="term" value="C:cytoplasm"/>
    <property type="evidence" value="ECO:0007669"/>
    <property type="project" value="UniProtKB-SubCell"/>
</dbReference>
<dbReference type="GO" id="GO:0005524">
    <property type="term" value="F:ATP binding"/>
    <property type="evidence" value="ECO:0007669"/>
    <property type="project" value="UniProtKB-UniRule"/>
</dbReference>
<dbReference type="GO" id="GO:0003677">
    <property type="term" value="F:DNA binding"/>
    <property type="evidence" value="ECO:0007669"/>
    <property type="project" value="UniProtKB-KW"/>
</dbReference>
<dbReference type="GO" id="GO:0034335">
    <property type="term" value="F:DNA negative supercoiling activity"/>
    <property type="evidence" value="ECO:0007669"/>
    <property type="project" value="UniProtKB-ARBA"/>
</dbReference>
<dbReference type="GO" id="GO:0046872">
    <property type="term" value="F:metal ion binding"/>
    <property type="evidence" value="ECO:0007669"/>
    <property type="project" value="UniProtKB-KW"/>
</dbReference>
<dbReference type="GO" id="GO:0006265">
    <property type="term" value="P:DNA topological change"/>
    <property type="evidence" value="ECO:0007669"/>
    <property type="project" value="UniProtKB-UniRule"/>
</dbReference>
<dbReference type="GO" id="GO:0006261">
    <property type="term" value="P:DNA-templated DNA replication"/>
    <property type="evidence" value="ECO:0007669"/>
    <property type="project" value="UniProtKB-UniRule"/>
</dbReference>
<dbReference type="CDD" id="cd16928">
    <property type="entry name" value="HATPase_GyrB-like"/>
    <property type="match status" value="1"/>
</dbReference>
<dbReference type="CDD" id="cd00822">
    <property type="entry name" value="TopoII_Trans_DNA_gyrase"/>
    <property type="match status" value="1"/>
</dbReference>
<dbReference type="CDD" id="cd03366">
    <property type="entry name" value="TOPRIM_TopoIIA_GyrB"/>
    <property type="match status" value="1"/>
</dbReference>
<dbReference type="FunFam" id="3.30.230.10:FF:000005">
    <property type="entry name" value="DNA gyrase subunit B"/>
    <property type="match status" value="1"/>
</dbReference>
<dbReference type="FunFam" id="3.30.565.10:FF:000002">
    <property type="entry name" value="DNA gyrase subunit B"/>
    <property type="match status" value="1"/>
</dbReference>
<dbReference type="FunFam" id="3.40.50.670:FF:000002">
    <property type="entry name" value="DNA gyrase subunit B"/>
    <property type="match status" value="1"/>
</dbReference>
<dbReference type="Gene3D" id="3.30.230.10">
    <property type="match status" value="1"/>
</dbReference>
<dbReference type="Gene3D" id="3.40.50.670">
    <property type="match status" value="1"/>
</dbReference>
<dbReference type="Gene3D" id="3.30.565.10">
    <property type="entry name" value="Histidine kinase-like ATPase, C-terminal domain"/>
    <property type="match status" value="1"/>
</dbReference>
<dbReference type="HAMAP" id="MF_01898">
    <property type="entry name" value="GyrB"/>
    <property type="match status" value="1"/>
</dbReference>
<dbReference type="InterPro" id="IPR002288">
    <property type="entry name" value="DNA_gyrase_B_C"/>
</dbReference>
<dbReference type="InterPro" id="IPR011557">
    <property type="entry name" value="GyrB"/>
</dbReference>
<dbReference type="InterPro" id="IPR036890">
    <property type="entry name" value="HATPase_C_sf"/>
</dbReference>
<dbReference type="InterPro" id="IPR020568">
    <property type="entry name" value="Ribosomal_Su5_D2-typ_SF"/>
</dbReference>
<dbReference type="InterPro" id="IPR014721">
    <property type="entry name" value="Ribsml_uS5_D2-typ_fold_subgr"/>
</dbReference>
<dbReference type="InterPro" id="IPR001241">
    <property type="entry name" value="Topo_IIA"/>
</dbReference>
<dbReference type="InterPro" id="IPR013760">
    <property type="entry name" value="Topo_IIA-like_dom_sf"/>
</dbReference>
<dbReference type="InterPro" id="IPR000565">
    <property type="entry name" value="Topo_IIA_B"/>
</dbReference>
<dbReference type="InterPro" id="IPR013759">
    <property type="entry name" value="Topo_IIA_B_C"/>
</dbReference>
<dbReference type="InterPro" id="IPR013506">
    <property type="entry name" value="Topo_IIA_bsu_dom2"/>
</dbReference>
<dbReference type="InterPro" id="IPR018522">
    <property type="entry name" value="TopoIIA_CS"/>
</dbReference>
<dbReference type="InterPro" id="IPR006171">
    <property type="entry name" value="TOPRIM_dom"/>
</dbReference>
<dbReference type="InterPro" id="IPR034160">
    <property type="entry name" value="TOPRIM_GyrB"/>
</dbReference>
<dbReference type="NCBIfam" id="TIGR01059">
    <property type="entry name" value="gyrB"/>
    <property type="match status" value="1"/>
</dbReference>
<dbReference type="NCBIfam" id="NF004189">
    <property type="entry name" value="PRK05644.1"/>
    <property type="match status" value="1"/>
</dbReference>
<dbReference type="PANTHER" id="PTHR45866:SF1">
    <property type="entry name" value="DNA GYRASE SUBUNIT B, MITOCHONDRIAL"/>
    <property type="match status" value="1"/>
</dbReference>
<dbReference type="PANTHER" id="PTHR45866">
    <property type="entry name" value="DNA GYRASE/TOPOISOMERASE SUBUNIT B"/>
    <property type="match status" value="1"/>
</dbReference>
<dbReference type="Pfam" id="PF00204">
    <property type="entry name" value="DNA_gyraseB"/>
    <property type="match status" value="1"/>
</dbReference>
<dbReference type="Pfam" id="PF00986">
    <property type="entry name" value="DNA_gyraseB_C"/>
    <property type="match status" value="1"/>
</dbReference>
<dbReference type="Pfam" id="PF02518">
    <property type="entry name" value="HATPase_c"/>
    <property type="match status" value="1"/>
</dbReference>
<dbReference type="Pfam" id="PF01751">
    <property type="entry name" value="Toprim"/>
    <property type="match status" value="1"/>
</dbReference>
<dbReference type="PRINTS" id="PR01159">
    <property type="entry name" value="DNAGYRASEB"/>
</dbReference>
<dbReference type="PRINTS" id="PR00418">
    <property type="entry name" value="TPI2FAMILY"/>
</dbReference>
<dbReference type="SMART" id="SM00387">
    <property type="entry name" value="HATPase_c"/>
    <property type="match status" value="1"/>
</dbReference>
<dbReference type="SMART" id="SM00433">
    <property type="entry name" value="TOP2c"/>
    <property type="match status" value="1"/>
</dbReference>
<dbReference type="SUPFAM" id="SSF55874">
    <property type="entry name" value="ATPase domain of HSP90 chaperone/DNA topoisomerase II/histidine kinase"/>
    <property type="match status" value="1"/>
</dbReference>
<dbReference type="SUPFAM" id="SSF54211">
    <property type="entry name" value="Ribosomal protein S5 domain 2-like"/>
    <property type="match status" value="1"/>
</dbReference>
<dbReference type="SUPFAM" id="SSF56719">
    <property type="entry name" value="Type II DNA topoisomerase"/>
    <property type="match status" value="1"/>
</dbReference>
<dbReference type="PROSITE" id="PS00177">
    <property type="entry name" value="TOPOISOMERASE_II"/>
    <property type="match status" value="1"/>
</dbReference>
<dbReference type="PROSITE" id="PS50880">
    <property type="entry name" value="TOPRIM"/>
    <property type="match status" value="1"/>
</dbReference>
<accession>A5TY73</accession>
<accession>P41514</accession>
<accession>P77897</accession>
<proteinExistence type="inferred from homology"/>
<organism>
    <name type="scientific">Mycobacterium tuberculosis (strain ATCC 25177 / H37Ra)</name>
    <dbReference type="NCBI Taxonomy" id="419947"/>
    <lineage>
        <taxon>Bacteria</taxon>
        <taxon>Bacillati</taxon>
        <taxon>Actinomycetota</taxon>
        <taxon>Actinomycetes</taxon>
        <taxon>Mycobacteriales</taxon>
        <taxon>Mycobacteriaceae</taxon>
        <taxon>Mycobacterium</taxon>
        <taxon>Mycobacterium tuberculosis complex</taxon>
    </lineage>
</organism>
<evidence type="ECO:0000255" key="1">
    <source>
        <dbReference type="HAMAP-Rule" id="MF_01898"/>
    </source>
</evidence>
<evidence type="ECO:0000305" key="2"/>
<comment type="function">
    <text evidence="1">A type II topoisomerase that negatively supercoils closed circular double-stranded (ds) DNA in an ATP-dependent manner to modulate DNA topology and maintain chromosomes in an underwound state. Negative supercoiling favors strand separation, and DNA replication, transcription, recombination and repair, all of which involve strand separation. Also able to catalyze the interconversion of other topological isomers of dsDNA rings, including catenanes and knotted rings. Type II topoisomerases break and join 2 DNA strands simultaneously in an ATP-dependent manner.</text>
</comment>
<comment type="catalytic activity">
    <reaction evidence="1">
        <text>ATP-dependent breakage, passage and rejoining of double-stranded DNA.</text>
        <dbReference type="EC" id="5.6.2.2"/>
    </reaction>
</comment>
<comment type="cofactor">
    <cofactor evidence="1">
        <name>Mg(2+)</name>
        <dbReference type="ChEBI" id="CHEBI:18420"/>
    </cofactor>
    <cofactor evidence="1">
        <name>Mn(2+)</name>
        <dbReference type="ChEBI" id="CHEBI:29035"/>
    </cofactor>
    <cofactor evidence="1">
        <name>Ca(2+)</name>
        <dbReference type="ChEBI" id="CHEBI:29108"/>
    </cofactor>
    <text evidence="1">Binds two Mg(2+) per subunit. The magnesium ions form salt bridges with both the protein and the DNA. Can also accept other divalent metal cations, such as Mn(2+) or Ca(2+).</text>
</comment>
<comment type="subunit">
    <text evidence="1">Heterotetramer, composed of two GyrA and two GyrB chains. In the heterotetramer, GyrA contains the active site tyrosine that forms a transient covalent intermediate with DNA, while GyrB binds cofactors and catalyzes ATP hydrolysis.</text>
</comment>
<comment type="subcellular location">
    <subcellularLocation>
        <location evidence="1">Cytoplasm</location>
    </subcellularLocation>
</comment>
<comment type="miscellaneous">
    <text evidence="1">Few gyrases are as efficient as E.coli at forming negative supercoils. Not all organisms have 2 type II topoisomerases; in organisms with a single type II topoisomerase this enzyme also has to decatenate newly replicated chromosomes.</text>
</comment>
<comment type="similarity">
    <text evidence="1">Belongs to the type II topoisomerase GyrB family.</text>
</comment>
<comment type="sequence caution" evidence="2">
    <conflict type="erroneous initiation">
        <sequence resource="EMBL-CDS" id="ABQ71723"/>
    </conflict>
    <text>Extended N-terminus.</text>
</comment>
<comment type="sequence caution" evidence="2">
    <conflict type="erroneous initiation">
        <sequence resource="EMBL-CDS" id="CAA55486"/>
    </conflict>
    <text>Extended N-terminus.</text>
</comment>
<reference key="1">
    <citation type="journal article" date="1994" name="Biochem. Mol. Biol. Int.">
        <title>Molecular cloning of gyrA and gyrB genes of Mycobacterium tuberculosis: analysis of nucleotide sequence.</title>
        <authorList>
            <person name="Madhusudan K."/>
            <person name="Ramesh V."/>
            <person name="Nagaraja V."/>
        </authorList>
    </citation>
    <scope>NUCLEOTIDE SEQUENCE [GENOMIC DNA]</scope>
</reference>
<reference key="2">
    <citation type="journal article" date="2008" name="PLoS ONE">
        <title>Genetic basis of virulence attenuation revealed by comparative genomic analysis of Mycobacterium tuberculosis strain H37Ra versus H37Rv.</title>
        <authorList>
            <person name="Zheng H."/>
            <person name="Lu L."/>
            <person name="Wang B."/>
            <person name="Pu S."/>
            <person name="Zhang X."/>
            <person name="Zhu G."/>
            <person name="Shi W."/>
            <person name="Zhang L."/>
            <person name="Wang H."/>
            <person name="Wang S."/>
            <person name="Zhao G."/>
            <person name="Zhang Y."/>
        </authorList>
    </citation>
    <scope>NUCLEOTIDE SEQUENCE [LARGE SCALE GENOMIC DNA]</scope>
    <source>
        <strain>ATCC 25177 / H37Ra</strain>
    </source>
</reference>
<protein>
    <recommendedName>
        <fullName evidence="1">DNA gyrase subunit B</fullName>
        <ecNumber evidence="1">5.6.2.2</ecNumber>
    </recommendedName>
</protein>
<keyword id="KW-0067">ATP-binding</keyword>
<keyword id="KW-0963">Cytoplasm</keyword>
<keyword id="KW-0238">DNA-binding</keyword>
<keyword id="KW-0413">Isomerase</keyword>
<keyword id="KW-0460">Magnesium</keyword>
<keyword id="KW-0479">Metal-binding</keyword>
<keyword id="KW-0547">Nucleotide-binding</keyword>
<keyword id="KW-1185">Reference proteome</keyword>
<keyword id="KW-0799">Topoisomerase</keyword>